<name>STBC_STABI</name>
<evidence type="ECO:0000255" key="1"/>
<evidence type="ECO:0000269" key="2">
    <source>
    </source>
</evidence>
<evidence type="ECO:0000303" key="3">
    <source>
    </source>
</evidence>
<evidence type="ECO:0000305" key="4"/>
<keyword id="KW-0460">Magnesium</keyword>
<keyword id="KW-0472">Membrane</keyword>
<keyword id="KW-0808">Transferase</keyword>
<keyword id="KW-0812">Transmembrane</keyword>
<keyword id="KW-1133">Transmembrane helix</keyword>
<reference key="1">
    <citation type="journal article" date="2016" name="ChemBioChem">
        <title>Biosynthesis of LL-Z1272beta: discovery of a new member of NRPS-like enzymes for aryl-aldehyde formation.</title>
        <authorList>
            <person name="Li C."/>
            <person name="Matsuda Y."/>
            <person name="Gao H."/>
            <person name="Hu D."/>
            <person name="Yao X.S."/>
            <person name="Abe I."/>
        </authorList>
    </citation>
    <scope>NUCLEOTIDE SEQUENCE [GENOMIC DNA]</scope>
    <scope>FUNCTION</scope>
    <scope>CATALYTIC ACTIVITY</scope>
    <scope>PATHWAY</scope>
    <source>
        <strain>PYH05-7</strain>
    </source>
</reference>
<feature type="chain" id="PRO_0000450381" description="Prenyltransferase stbC">
    <location>
        <begin position="1"/>
        <end position="333"/>
    </location>
</feature>
<feature type="transmembrane region" description="Helical" evidence="1">
    <location>
        <begin position="74"/>
        <end position="94"/>
    </location>
</feature>
<feature type="transmembrane region" description="Helical" evidence="1">
    <location>
        <begin position="125"/>
        <end position="145"/>
    </location>
</feature>
<feature type="transmembrane region" description="Helical" evidence="1">
    <location>
        <begin position="147"/>
        <end position="164"/>
    </location>
</feature>
<feature type="transmembrane region" description="Helical" evidence="1">
    <location>
        <begin position="173"/>
        <end position="193"/>
    </location>
</feature>
<feature type="transmembrane region" description="Helical" evidence="1">
    <location>
        <begin position="201"/>
        <end position="221"/>
    </location>
</feature>
<feature type="transmembrane region" description="Helical" evidence="1">
    <location>
        <begin position="247"/>
        <end position="267"/>
    </location>
</feature>
<feature type="transmembrane region" description="Helical" evidence="1">
    <location>
        <begin position="272"/>
        <end position="292"/>
    </location>
</feature>
<feature type="transmembrane region" description="Helical" evidence="1">
    <location>
        <begin position="304"/>
        <end position="324"/>
    </location>
</feature>
<sequence>MPATRTPIHPEAAAYKNPRYQSGPLSVIPKSFVPYCELMRLELPHGNFLGYFPHLVGLLYGSSASPARLPANEVAFQAVLYIGWTFFMRGAGCAWNDVVDQDFDRKTTRCRVRPVARGAVSTTSANIFGFAMVALAFACISPLPAECQRLGLMTTVLSIIYPFCKRVTNFAQVILGMTLAINFILAAYGAGLPAIEAPYTVPTICVTTAITLLVVFYDVVYARQDTADDLKSGVKGMAVLFRNYVEILLTSITLVIAGLIATTGVLVDNGPYFFVFSVAGLLAALLAMIGGIRYRIFHTWNSYSGWFYALAIFNLLGGYLIEYLDQVPMLNKA</sequence>
<proteinExistence type="evidence at protein level"/>
<accession>A0A193PS58</accession>
<dbReference type="EC" id="2.5.1.-" evidence="2"/>
<dbReference type="EMBL" id="LC125467">
    <property type="protein sequence ID" value="BAV19381.1"/>
    <property type="molecule type" value="Genomic_DNA"/>
</dbReference>
<dbReference type="SMR" id="A0A193PS58"/>
<dbReference type="UniPathway" id="UPA00213"/>
<dbReference type="GO" id="GO:0005743">
    <property type="term" value="C:mitochondrial inner membrane"/>
    <property type="evidence" value="ECO:0007669"/>
    <property type="project" value="TreeGrafter"/>
</dbReference>
<dbReference type="GO" id="GO:0008412">
    <property type="term" value="F:4-hydroxybenzoate polyprenyltransferase activity"/>
    <property type="evidence" value="ECO:0007669"/>
    <property type="project" value="TreeGrafter"/>
</dbReference>
<dbReference type="GO" id="GO:0016114">
    <property type="term" value="P:terpenoid biosynthetic process"/>
    <property type="evidence" value="ECO:0007669"/>
    <property type="project" value="UniProtKB-UniPathway"/>
</dbReference>
<dbReference type="GO" id="GO:0006744">
    <property type="term" value="P:ubiquinone biosynthetic process"/>
    <property type="evidence" value="ECO:0007669"/>
    <property type="project" value="TreeGrafter"/>
</dbReference>
<dbReference type="CDD" id="cd13959">
    <property type="entry name" value="PT_UbiA_COQ2"/>
    <property type="match status" value="1"/>
</dbReference>
<dbReference type="FunFam" id="1.10.357.140:FF:000008">
    <property type="entry name" value="4-hydroxybenzoate octaprenyltransferase"/>
    <property type="match status" value="1"/>
</dbReference>
<dbReference type="Gene3D" id="1.10.357.140">
    <property type="entry name" value="UbiA prenyltransferase"/>
    <property type="match status" value="1"/>
</dbReference>
<dbReference type="Gene3D" id="1.20.120.1780">
    <property type="entry name" value="UbiA prenyltransferase"/>
    <property type="match status" value="1"/>
</dbReference>
<dbReference type="InterPro" id="IPR039653">
    <property type="entry name" value="Prenyltransferase"/>
</dbReference>
<dbReference type="InterPro" id="IPR000537">
    <property type="entry name" value="UbiA_prenyltransferase"/>
</dbReference>
<dbReference type="InterPro" id="IPR044878">
    <property type="entry name" value="UbiA_sf"/>
</dbReference>
<dbReference type="PANTHER" id="PTHR11048:SF39">
    <property type="entry name" value="POLYPRENYL TRANSFERASE AUSN"/>
    <property type="match status" value="1"/>
</dbReference>
<dbReference type="PANTHER" id="PTHR11048">
    <property type="entry name" value="PRENYLTRANSFERASES"/>
    <property type="match status" value="1"/>
</dbReference>
<dbReference type="Pfam" id="PF01040">
    <property type="entry name" value="UbiA"/>
    <property type="match status" value="1"/>
</dbReference>
<protein>
    <recommendedName>
        <fullName evidence="3">Prenyltransferase stbC</fullName>
        <ecNumber evidence="2">2.5.1.-</ecNumber>
    </recommendedName>
    <alternativeName>
        <fullName evidence="3">Ilicicolin B biosynthesis cluster protein stbC</fullName>
    </alternativeName>
    <alternativeName>
        <fullName evidence="3">LL-Z1272-beta biosynthesis cluster protein stbC</fullName>
    </alternativeName>
</protein>
<organism>
    <name type="scientific">Stachybotrys bisbyi</name>
    <name type="common">Hyalostachybotrys bisbyi</name>
    <dbReference type="NCBI Taxonomy" id="80385"/>
    <lineage>
        <taxon>Eukaryota</taxon>
        <taxon>Fungi</taxon>
        <taxon>Dikarya</taxon>
        <taxon>Ascomycota</taxon>
        <taxon>Pezizomycotina</taxon>
        <taxon>Sordariomycetes</taxon>
        <taxon>Hypocreomycetidae</taxon>
        <taxon>Hypocreales</taxon>
        <taxon>Stachybotryaceae</taxon>
        <taxon>Stachybotrys</taxon>
    </lineage>
</organism>
<comment type="function">
    <text evidence="2">Prenyltransferase; part of the cluster that mediates the biosynthesis of LL-Z1272-beta, also known as ilicicolin B, a prenylated aryl-aldehyde produced by several fungi and that serves as a key pathway intermediate for many fungal meroterpenoids (PubMed:26972702). The first step in the pathway is performed by the non-reducing polyketide synthase stbA that produces orsellinic acid by condensing acetyl-CoA with 3 malonyl-CoA units (PubMed:26972702). The prenyltransferase stbC then prenylates orsenilic acid into grifolic acid (PubMed:26972702). Finally, grifolic acid is reduced to ilicicolin B by the NRPS-like protein stbB (PubMed:26972702).</text>
</comment>
<comment type="catalytic activity">
    <reaction evidence="2">
        <text>orsellinate + (2E,6E)-farnesyl diphosphate = ilicicolinate B + diphosphate</text>
        <dbReference type="Rhea" id="RHEA:63012"/>
        <dbReference type="ChEBI" id="CHEBI:16162"/>
        <dbReference type="ChEBI" id="CHEBI:33019"/>
        <dbReference type="ChEBI" id="CHEBI:146152"/>
        <dbReference type="ChEBI" id="CHEBI:175763"/>
    </reaction>
    <physiologicalReaction direction="left-to-right" evidence="2">
        <dbReference type="Rhea" id="RHEA:63013"/>
    </physiologicalReaction>
</comment>
<comment type="pathway">
    <text evidence="2">Secondary metabolite biosynthesis; terpenoid biosynthesis.</text>
</comment>
<comment type="subcellular location">
    <subcellularLocation>
        <location evidence="1">Membrane</location>
        <topology evidence="1">Multi-pass membrane protein</topology>
    </subcellularLocation>
</comment>
<comment type="similarity">
    <text evidence="4">Belongs to the UbiA prenyltransferase family.</text>
</comment>
<gene>
    <name evidence="3" type="primary">stbC</name>
</gene>